<gene>
    <name evidence="1" type="primary">rex</name>
    <name type="ordered locus">SCO3320</name>
    <name type="ORF">SCE68.18c</name>
</gene>
<organism>
    <name type="scientific">Streptomyces coelicolor (strain ATCC BAA-471 / A3(2) / M145)</name>
    <dbReference type="NCBI Taxonomy" id="100226"/>
    <lineage>
        <taxon>Bacteria</taxon>
        <taxon>Bacillati</taxon>
        <taxon>Actinomycetota</taxon>
        <taxon>Actinomycetes</taxon>
        <taxon>Kitasatosporales</taxon>
        <taxon>Streptomycetaceae</taxon>
        <taxon>Streptomyces</taxon>
        <taxon>Streptomyces albidoflavus group</taxon>
    </lineage>
</organism>
<dbReference type="EMBL" id="AL939116">
    <property type="protein sequence ID" value="CAB45354.1"/>
    <property type="molecule type" value="Genomic_DNA"/>
</dbReference>
<dbReference type="PIR" id="T36268">
    <property type="entry name" value="T36268"/>
</dbReference>
<dbReference type="RefSeq" id="NP_627530.1">
    <property type="nucleotide sequence ID" value="NC_003888.3"/>
</dbReference>
<dbReference type="RefSeq" id="WP_003975516.1">
    <property type="nucleotide sequence ID" value="NZ_VNID01000025.1"/>
</dbReference>
<dbReference type="SMR" id="Q9WX14"/>
<dbReference type="DIP" id="DIP-48429N"/>
<dbReference type="STRING" id="100226.gene:17760939"/>
<dbReference type="PaxDb" id="100226-SCO3320"/>
<dbReference type="KEGG" id="sco:SCO3320"/>
<dbReference type="PATRIC" id="fig|100226.15.peg.3380"/>
<dbReference type="eggNOG" id="COG2344">
    <property type="taxonomic scope" value="Bacteria"/>
</dbReference>
<dbReference type="HOGENOM" id="CLU_061534_0_1_11"/>
<dbReference type="InParanoid" id="Q9WX14"/>
<dbReference type="OrthoDB" id="9784760at2"/>
<dbReference type="PhylomeDB" id="Q9WX14"/>
<dbReference type="Proteomes" id="UP000001973">
    <property type="component" value="Chromosome"/>
</dbReference>
<dbReference type="GO" id="GO:0005737">
    <property type="term" value="C:cytoplasm"/>
    <property type="evidence" value="ECO:0007669"/>
    <property type="project" value="UniProtKB-SubCell"/>
</dbReference>
<dbReference type="GO" id="GO:0003677">
    <property type="term" value="F:DNA binding"/>
    <property type="evidence" value="ECO:0007669"/>
    <property type="project" value="UniProtKB-UniRule"/>
</dbReference>
<dbReference type="GO" id="GO:0003700">
    <property type="term" value="F:DNA-binding transcription factor activity"/>
    <property type="evidence" value="ECO:0007669"/>
    <property type="project" value="UniProtKB-UniRule"/>
</dbReference>
<dbReference type="GO" id="GO:0042802">
    <property type="term" value="F:identical protein binding"/>
    <property type="evidence" value="ECO:0000353"/>
    <property type="project" value="IntAct"/>
</dbReference>
<dbReference type="GO" id="GO:0045892">
    <property type="term" value="P:negative regulation of DNA-templated transcription"/>
    <property type="evidence" value="ECO:0007669"/>
    <property type="project" value="InterPro"/>
</dbReference>
<dbReference type="GO" id="GO:0051775">
    <property type="term" value="P:response to redox state"/>
    <property type="evidence" value="ECO:0007669"/>
    <property type="project" value="InterPro"/>
</dbReference>
<dbReference type="FunFam" id="1.10.10.10:FF:000124">
    <property type="entry name" value="Redox-sensing transcriptional repressor Rex"/>
    <property type="match status" value="1"/>
</dbReference>
<dbReference type="FunFam" id="3.40.50.720:FF:000303">
    <property type="entry name" value="Redox-sensing transcriptional repressor Rex"/>
    <property type="match status" value="1"/>
</dbReference>
<dbReference type="Gene3D" id="3.40.50.720">
    <property type="entry name" value="NAD(P)-binding Rossmann-like Domain"/>
    <property type="match status" value="1"/>
</dbReference>
<dbReference type="Gene3D" id="1.10.10.10">
    <property type="entry name" value="Winged helix-like DNA-binding domain superfamily/Winged helix DNA-binding domain"/>
    <property type="match status" value="1"/>
</dbReference>
<dbReference type="HAMAP" id="MF_01131">
    <property type="entry name" value="Rex"/>
    <property type="match status" value="1"/>
</dbReference>
<dbReference type="InterPro" id="IPR003781">
    <property type="entry name" value="CoA-bd"/>
</dbReference>
<dbReference type="InterPro" id="IPR036291">
    <property type="entry name" value="NAD(P)-bd_dom_sf"/>
</dbReference>
<dbReference type="InterPro" id="IPR009718">
    <property type="entry name" value="Rex_DNA-bd_C_dom"/>
</dbReference>
<dbReference type="InterPro" id="IPR022876">
    <property type="entry name" value="Tscrpt_rep_Rex"/>
</dbReference>
<dbReference type="InterPro" id="IPR036388">
    <property type="entry name" value="WH-like_DNA-bd_sf"/>
</dbReference>
<dbReference type="InterPro" id="IPR036390">
    <property type="entry name" value="WH_DNA-bd_sf"/>
</dbReference>
<dbReference type="NCBIfam" id="NF003989">
    <property type="entry name" value="PRK05472.1-3"/>
    <property type="match status" value="1"/>
</dbReference>
<dbReference type="NCBIfam" id="NF003992">
    <property type="entry name" value="PRK05472.2-1"/>
    <property type="match status" value="1"/>
</dbReference>
<dbReference type="NCBIfam" id="NF003993">
    <property type="entry name" value="PRK05472.2-2"/>
    <property type="match status" value="1"/>
</dbReference>
<dbReference type="NCBIfam" id="NF003994">
    <property type="entry name" value="PRK05472.2-3"/>
    <property type="match status" value="1"/>
</dbReference>
<dbReference type="NCBIfam" id="NF003995">
    <property type="entry name" value="PRK05472.2-4"/>
    <property type="match status" value="1"/>
</dbReference>
<dbReference type="NCBIfam" id="NF003996">
    <property type="entry name" value="PRK05472.2-5"/>
    <property type="match status" value="1"/>
</dbReference>
<dbReference type="PANTHER" id="PTHR35786">
    <property type="entry name" value="REDOX-SENSING TRANSCRIPTIONAL REPRESSOR REX"/>
    <property type="match status" value="1"/>
</dbReference>
<dbReference type="PANTHER" id="PTHR35786:SF1">
    <property type="entry name" value="REDOX-SENSING TRANSCRIPTIONAL REPRESSOR REX 1"/>
    <property type="match status" value="1"/>
</dbReference>
<dbReference type="Pfam" id="PF02629">
    <property type="entry name" value="CoA_binding"/>
    <property type="match status" value="1"/>
</dbReference>
<dbReference type="Pfam" id="PF06971">
    <property type="entry name" value="Put_DNA-bind_N"/>
    <property type="match status" value="1"/>
</dbReference>
<dbReference type="SMART" id="SM00881">
    <property type="entry name" value="CoA_binding"/>
    <property type="match status" value="1"/>
</dbReference>
<dbReference type="SUPFAM" id="SSF51735">
    <property type="entry name" value="NAD(P)-binding Rossmann-fold domains"/>
    <property type="match status" value="1"/>
</dbReference>
<dbReference type="SUPFAM" id="SSF46785">
    <property type="entry name" value="Winged helix' DNA-binding domain"/>
    <property type="match status" value="1"/>
</dbReference>
<protein>
    <recommendedName>
        <fullName evidence="1">Redox-sensing transcriptional repressor Rex</fullName>
    </recommendedName>
</protein>
<comment type="function">
    <text evidence="3">Modulates transcription of respiratory genes in response to changes in cellular NADH/NAD(+) redox state (PubMed:12970197). Binds to the DNA sequence motif 5'-TGTGAACGCGTTCACA-3' in the promoter of the cydABCD operon (PubMed:12970197). May play a general role as a sensor of cellular redox balance (PubMed:12970197).</text>
</comment>
<comment type="subunit">
    <text>Homodimer.</text>
</comment>
<comment type="interaction">
    <interactant intactId="EBI-15532671">
        <id>Q9WX14</id>
    </interactant>
    <interactant intactId="EBI-15532671">
        <id>Q9WX14</id>
        <label>rex</label>
    </interactant>
    <organismsDiffer>false</organismsDiffer>
    <experiments>2</experiments>
</comment>
<comment type="subcellular location">
    <subcellularLocation>
        <location evidence="4">Cytoplasm</location>
    </subcellularLocation>
</comment>
<comment type="similarity">
    <text evidence="1">Belongs to the transcriptional regulatory Rex family.</text>
</comment>
<accession>Q9WX14</accession>
<reference key="1">
    <citation type="journal article" date="2002" name="Nature">
        <title>Complete genome sequence of the model actinomycete Streptomyces coelicolor A3(2).</title>
        <authorList>
            <person name="Bentley S.D."/>
            <person name="Chater K.F."/>
            <person name="Cerdeno-Tarraga A.-M."/>
            <person name="Challis G.L."/>
            <person name="Thomson N.R."/>
            <person name="James K.D."/>
            <person name="Harris D.E."/>
            <person name="Quail M.A."/>
            <person name="Kieser H."/>
            <person name="Harper D."/>
            <person name="Bateman A."/>
            <person name="Brown S."/>
            <person name="Chandra G."/>
            <person name="Chen C.W."/>
            <person name="Collins M."/>
            <person name="Cronin A."/>
            <person name="Fraser A."/>
            <person name="Goble A."/>
            <person name="Hidalgo J."/>
            <person name="Hornsby T."/>
            <person name="Howarth S."/>
            <person name="Huang C.-H."/>
            <person name="Kieser T."/>
            <person name="Larke L."/>
            <person name="Murphy L.D."/>
            <person name="Oliver K."/>
            <person name="O'Neil S."/>
            <person name="Rabbinowitsch E."/>
            <person name="Rajandream M.A."/>
            <person name="Rutherford K.M."/>
            <person name="Rutter S."/>
            <person name="Seeger K."/>
            <person name="Saunders D."/>
            <person name="Sharp S."/>
            <person name="Squares R."/>
            <person name="Squares S."/>
            <person name="Taylor K."/>
            <person name="Warren T."/>
            <person name="Wietzorrek A."/>
            <person name="Woodward J.R."/>
            <person name="Barrell B.G."/>
            <person name="Parkhill J."/>
            <person name="Hopwood D.A."/>
        </authorList>
    </citation>
    <scope>NUCLEOTIDE SEQUENCE [LARGE SCALE GENOMIC DNA]</scope>
    <source>
        <strain>ATCC BAA-471 / A3(2) / M145</strain>
    </source>
</reference>
<reference key="2">
    <citation type="journal article" date="2003" name="EMBO J.">
        <title>A novel sensor of NADH/NAD+ redox poise in Streptomyces coelicolor A3(2).</title>
        <authorList>
            <person name="Brekasis D."/>
            <person name="Paget M.S.B."/>
        </authorList>
    </citation>
    <scope>FUNCTION</scope>
    <scope>MUTAGENESIS OF GLY-102</scope>
    <source>
        <strain>A3(2) / M600</strain>
    </source>
</reference>
<feature type="chain" id="PRO_0000097916" description="Redox-sensing transcriptional repressor Rex">
    <location>
        <begin position="1"/>
        <end position="258"/>
    </location>
</feature>
<feature type="DNA-binding region" description="H-T-H motif" evidence="1">
    <location>
        <begin position="26"/>
        <end position="65"/>
    </location>
</feature>
<feature type="region of interest" description="Disordered" evidence="2">
    <location>
        <begin position="219"/>
        <end position="258"/>
    </location>
</feature>
<feature type="compositionally biased region" description="Low complexity" evidence="2">
    <location>
        <begin position="225"/>
        <end position="234"/>
    </location>
</feature>
<feature type="binding site" evidence="1">
    <location>
        <begin position="100"/>
        <end position="105"/>
    </location>
    <ligand>
        <name>NAD(+)</name>
        <dbReference type="ChEBI" id="CHEBI:57540"/>
    </ligand>
</feature>
<feature type="mutagenesis site" description="Loss of redox sensing." evidence="3">
    <original>G</original>
    <variation>A</variation>
    <location>
        <position position="102"/>
    </location>
</feature>
<sequence length="258" mass="26809">MATGRAHRPATRSRGIPEATVARLPLYLRALTALSERSVPTVSSEELAAAAGVNSAKLRKDFSYLGSYGTRGVGYDVEYLVYQISRELGLTQDWPVVIVGIGNLGAALANYGGFASRGFRVAALIDADPGMAGKPVAGIPVQHTDELEKIIQDDGVSIGVIATPAGAAQQVCDRLVAAGVTSILNFAPTVLNVPEGVDVRKVDLSIELQILAFHEQRKAGEEAAADGAAPPVAARKQQRSTGSADQGPDGDVPAVMPA</sequence>
<evidence type="ECO:0000255" key="1">
    <source>
        <dbReference type="HAMAP-Rule" id="MF_01131"/>
    </source>
</evidence>
<evidence type="ECO:0000256" key="2">
    <source>
        <dbReference type="SAM" id="MobiDB-lite"/>
    </source>
</evidence>
<evidence type="ECO:0000269" key="3">
    <source>
    </source>
</evidence>
<evidence type="ECO:0000305" key="4"/>
<name>REX_STRCO</name>
<keyword id="KW-0963">Cytoplasm</keyword>
<keyword id="KW-0238">DNA-binding</keyword>
<keyword id="KW-0520">NAD</keyword>
<keyword id="KW-1185">Reference proteome</keyword>
<keyword id="KW-0678">Repressor</keyword>
<keyword id="KW-0804">Transcription</keyword>
<keyword id="KW-0805">Transcription regulation</keyword>
<proteinExistence type="evidence at protein level"/>